<evidence type="ECO:0000250" key="1"/>
<evidence type="ECO:0000250" key="2">
    <source>
        <dbReference type="UniProtKB" id="O48782"/>
    </source>
</evidence>
<evidence type="ECO:0000255" key="3"/>
<evidence type="ECO:0000269" key="4">
    <source>
    </source>
</evidence>
<evidence type="ECO:0000305" key="5"/>
<protein>
    <recommendedName>
        <fullName>Heme-degrading monooxygenase HmoA</fullName>
        <ecNumber evidence="2">1.14.14.18</ecNumber>
    </recommendedName>
    <alternativeName>
        <fullName>Heme oxygenase</fullName>
    </alternativeName>
</protein>
<keyword id="KW-0963">Cytoplasm</keyword>
<keyword id="KW-0349">Heme</keyword>
<keyword id="KW-0408">Iron</keyword>
<keyword id="KW-0479">Metal-binding</keyword>
<keyword id="KW-0503">Monooxygenase</keyword>
<keyword id="KW-0560">Oxidoreductase</keyword>
<keyword id="KW-1185">Reference proteome</keyword>
<gene>
    <name type="primary">hmoA</name>
    <name type="synonym">yetG</name>
    <name type="ordered locus">BSU07150</name>
</gene>
<proteinExistence type="evidence at protein level"/>
<accession>O31534</accession>
<organism>
    <name type="scientific">Bacillus subtilis (strain 168)</name>
    <dbReference type="NCBI Taxonomy" id="224308"/>
    <lineage>
        <taxon>Bacteria</taxon>
        <taxon>Bacillati</taxon>
        <taxon>Bacillota</taxon>
        <taxon>Bacilli</taxon>
        <taxon>Bacillales</taxon>
        <taxon>Bacillaceae</taxon>
        <taxon>Bacillus</taxon>
    </lineage>
</organism>
<reference key="1">
    <citation type="journal article" date="1997" name="Nature">
        <title>The complete genome sequence of the Gram-positive bacterium Bacillus subtilis.</title>
        <authorList>
            <person name="Kunst F."/>
            <person name="Ogasawara N."/>
            <person name="Moszer I."/>
            <person name="Albertini A.M."/>
            <person name="Alloni G."/>
            <person name="Azevedo V."/>
            <person name="Bertero M.G."/>
            <person name="Bessieres P."/>
            <person name="Bolotin A."/>
            <person name="Borchert S."/>
            <person name="Borriss R."/>
            <person name="Boursier L."/>
            <person name="Brans A."/>
            <person name="Braun M."/>
            <person name="Brignell S.C."/>
            <person name="Bron S."/>
            <person name="Brouillet S."/>
            <person name="Bruschi C.V."/>
            <person name="Caldwell B."/>
            <person name="Capuano V."/>
            <person name="Carter N.M."/>
            <person name="Choi S.-K."/>
            <person name="Codani J.-J."/>
            <person name="Connerton I.F."/>
            <person name="Cummings N.J."/>
            <person name="Daniel R.A."/>
            <person name="Denizot F."/>
            <person name="Devine K.M."/>
            <person name="Duesterhoeft A."/>
            <person name="Ehrlich S.D."/>
            <person name="Emmerson P.T."/>
            <person name="Entian K.-D."/>
            <person name="Errington J."/>
            <person name="Fabret C."/>
            <person name="Ferrari E."/>
            <person name="Foulger D."/>
            <person name="Fritz C."/>
            <person name="Fujita M."/>
            <person name="Fujita Y."/>
            <person name="Fuma S."/>
            <person name="Galizzi A."/>
            <person name="Galleron N."/>
            <person name="Ghim S.-Y."/>
            <person name="Glaser P."/>
            <person name="Goffeau A."/>
            <person name="Golightly E.J."/>
            <person name="Grandi G."/>
            <person name="Guiseppi G."/>
            <person name="Guy B.J."/>
            <person name="Haga K."/>
            <person name="Haiech J."/>
            <person name="Harwood C.R."/>
            <person name="Henaut A."/>
            <person name="Hilbert H."/>
            <person name="Holsappel S."/>
            <person name="Hosono S."/>
            <person name="Hullo M.-F."/>
            <person name="Itaya M."/>
            <person name="Jones L.-M."/>
            <person name="Joris B."/>
            <person name="Karamata D."/>
            <person name="Kasahara Y."/>
            <person name="Klaerr-Blanchard M."/>
            <person name="Klein C."/>
            <person name="Kobayashi Y."/>
            <person name="Koetter P."/>
            <person name="Koningstein G."/>
            <person name="Krogh S."/>
            <person name="Kumano M."/>
            <person name="Kurita K."/>
            <person name="Lapidus A."/>
            <person name="Lardinois S."/>
            <person name="Lauber J."/>
            <person name="Lazarevic V."/>
            <person name="Lee S.-M."/>
            <person name="Levine A."/>
            <person name="Liu H."/>
            <person name="Masuda S."/>
            <person name="Mauel C."/>
            <person name="Medigue C."/>
            <person name="Medina N."/>
            <person name="Mellado R.P."/>
            <person name="Mizuno M."/>
            <person name="Moestl D."/>
            <person name="Nakai S."/>
            <person name="Noback M."/>
            <person name="Noone D."/>
            <person name="O'Reilly M."/>
            <person name="Ogawa K."/>
            <person name="Ogiwara A."/>
            <person name="Oudega B."/>
            <person name="Park S.-H."/>
            <person name="Parro V."/>
            <person name="Pohl T.M."/>
            <person name="Portetelle D."/>
            <person name="Porwollik S."/>
            <person name="Prescott A.M."/>
            <person name="Presecan E."/>
            <person name="Pujic P."/>
            <person name="Purnelle B."/>
            <person name="Rapoport G."/>
            <person name="Rey M."/>
            <person name="Reynolds S."/>
            <person name="Rieger M."/>
            <person name="Rivolta C."/>
            <person name="Rocha E."/>
            <person name="Roche B."/>
            <person name="Rose M."/>
            <person name="Sadaie Y."/>
            <person name="Sato T."/>
            <person name="Scanlan E."/>
            <person name="Schleich S."/>
            <person name="Schroeter R."/>
            <person name="Scoffone F."/>
            <person name="Sekiguchi J."/>
            <person name="Sekowska A."/>
            <person name="Seror S.J."/>
            <person name="Serror P."/>
            <person name="Shin B.-S."/>
            <person name="Soldo B."/>
            <person name="Sorokin A."/>
            <person name="Tacconi E."/>
            <person name="Takagi T."/>
            <person name="Takahashi H."/>
            <person name="Takemaru K."/>
            <person name="Takeuchi M."/>
            <person name="Tamakoshi A."/>
            <person name="Tanaka T."/>
            <person name="Terpstra P."/>
            <person name="Tognoni A."/>
            <person name="Tosato V."/>
            <person name="Uchiyama S."/>
            <person name="Vandenbol M."/>
            <person name="Vannier F."/>
            <person name="Vassarotti A."/>
            <person name="Viari A."/>
            <person name="Wambutt R."/>
            <person name="Wedler E."/>
            <person name="Wedler H."/>
            <person name="Weitzenegger T."/>
            <person name="Winters P."/>
            <person name="Wipat A."/>
            <person name="Yamamoto H."/>
            <person name="Yamane K."/>
            <person name="Yasumoto K."/>
            <person name="Yata K."/>
            <person name="Yoshida K."/>
            <person name="Yoshikawa H.-F."/>
            <person name="Zumstein E."/>
            <person name="Yoshikawa H."/>
            <person name="Danchin A."/>
        </authorList>
    </citation>
    <scope>NUCLEOTIDE SEQUENCE [LARGE SCALE GENOMIC DNA]</scope>
    <source>
        <strain>168</strain>
    </source>
</reference>
<reference key="2">
    <citation type="journal article" date="2011" name="Microbiology">
        <title>Bacillus subtilis Fur represses one of two paralogous haem-degrading monooxygenases.</title>
        <authorList>
            <person name="Gaballa A."/>
            <person name="Helmann J.D."/>
        </authorList>
    </citation>
    <scope>FUNCTION</scope>
    <scope>MUTAGENESIS OF ARG-6</scope>
    <scope>DISRUPTION PHENOTYPE</scope>
    <scope>INDUCTION</scope>
    <scope>NOMENCLATURE</scope>
</reference>
<name>HMOA_BACSU</name>
<feature type="chain" id="PRO_0000360519" description="Heme-degrading monooxygenase HmoA">
    <location>
        <begin position="1"/>
        <end position="108"/>
    </location>
</feature>
<feature type="domain" description="ABM">
    <location>
        <begin position="2"/>
        <end position="95"/>
    </location>
</feature>
<feature type="binding site" description="axial binding residue" evidence="3">
    <location>
        <position position="76"/>
    </location>
    <ligand>
        <name>heme</name>
        <dbReference type="ChEBI" id="CHEBI:30413"/>
    </ligand>
    <ligandPart>
        <name>Fe</name>
        <dbReference type="ChEBI" id="CHEBI:18248"/>
    </ligandPart>
</feature>
<feature type="site" description="Transition state stabilizer" evidence="3">
    <location>
        <position position="66"/>
    </location>
</feature>
<feature type="mutagenesis site" description="Retains the ability to degrade haem, albeit at a reduced rate relative to the wild-type." evidence="4">
    <original>R</original>
    <variation>A</variation>
    <location>
        <position position="6"/>
    </location>
</feature>
<comment type="function">
    <text evidence="4">Allows bacterial pathogens to use the host heme as an iron source. Catalyzes the oxidative degradation of the heme macrocyclic porphyrin ring in the presence of a suitable electron donor such as ascorbate or NADPH--cytochrome P450 reductase, with subsequent release of free iron.</text>
</comment>
<comment type="catalytic activity">
    <reaction evidence="2">
        <text>heme b + 3 reduced [NADPH--hemoprotein reductase] + 3 O2 = biliverdin IXalpha + CO + Fe(2+) + 3 oxidized [NADPH--hemoprotein reductase] + 3 H2O + H(+)</text>
        <dbReference type="Rhea" id="RHEA:21764"/>
        <dbReference type="Rhea" id="RHEA-COMP:11964"/>
        <dbReference type="Rhea" id="RHEA-COMP:11965"/>
        <dbReference type="ChEBI" id="CHEBI:15377"/>
        <dbReference type="ChEBI" id="CHEBI:15378"/>
        <dbReference type="ChEBI" id="CHEBI:15379"/>
        <dbReference type="ChEBI" id="CHEBI:17245"/>
        <dbReference type="ChEBI" id="CHEBI:29033"/>
        <dbReference type="ChEBI" id="CHEBI:57618"/>
        <dbReference type="ChEBI" id="CHEBI:57991"/>
        <dbReference type="ChEBI" id="CHEBI:58210"/>
        <dbReference type="ChEBI" id="CHEBI:60344"/>
        <dbReference type="EC" id="1.14.14.18"/>
    </reaction>
</comment>
<comment type="subunit">
    <text evidence="2">Homodimer.</text>
</comment>
<comment type="subcellular location">
    <subcellularLocation>
        <location evidence="1">Cytoplasm</location>
    </subcellularLocation>
</comment>
<comment type="induction">
    <text evidence="4">Repressed by fur in the presence of iron.</text>
</comment>
<comment type="disruption phenotype">
    <text evidence="4">Neither hmoA single mutant nor the hmoA hmoB double mutant display robust and reproducible phenotypes relative to the wild-type.</text>
</comment>
<comment type="similarity">
    <text evidence="5">Belongs to the antibiotic biosynthesis monooxygenase family.</text>
</comment>
<dbReference type="EC" id="1.14.14.18" evidence="2"/>
<dbReference type="EMBL" id="AL009126">
    <property type="protein sequence ID" value="CAB12534.2"/>
    <property type="molecule type" value="Genomic_DNA"/>
</dbReference>
<dbReference type="PIR" id="D69798">
    <property type="entry name" value="D69798"/>
</dbReference>
<dbReference type="RefSeq" id="NP_388596.2">
    <property type="nucleotide sequence ID" value="NC_000964.3"/>
</dbReference>
<dbReference type="RefSeq" id="WP_003243958.1">
    <property type="nucleotide sequence ID" value="NZ_OZ025638.1"/>
</dbReference>
<dbReference type="SMR" id="O31534"/>
<dbReference type="FunCoup" id="O31534">
    <property type="interactions" value="34"/>
</dbReference>
<dbReference type="STRING" id="224308.BSU07150"/>
<dbReference type="PaxDb" id="224308-BSU07150"/>
<dbReference type="EnsemblBacteria" id="CAB12534">
    <property type="protein sequence ID" value="CAB12534"/>
    <property type="gene ID" value="BSU_07150"/>
</dbReference>
<dbReference type="GeneID" id="936085"/>
<dbReference type="KEGG" id="bsu:BSU07150"/>
<dbReference type="PATRIC" id="fig|224308.179.peg.775"/>
<dbReference type="eggNOG" id="COG2329">
    <property type="taxonomic scope" value="Bacteria"/>
</dbReference>
<dbReference type="InParanoid" id="O31534"/>
<dbReference type="OrthoDB" id="1645001at2"/>
<dbReference type="BioCyc" id="BSUB:BSU07150-MONOMER"/>
<dbReference type="Proteomes" id="UP000001570">
    <property type="component" value="Chromosome"/>
</dbReference>
<dbReference type="GO" id="GO:0005737">
    <property type="term" value="C:cytoplasm"/>
    <property type="evidence" value="ECO:0007669"/>
    <property type="project" value="UniProtKB-SubCell"/>
</dbReference>
<dbReference type="GO" id="GO:0004392">
    <property type="term" value="F:heme oxygenase (decyclizing) activity"/>
    <property type="evidence" value="ECO:0000318"/>
    <property type="project" value="GO_Central"/>
</dbReference>
<dbReference type="GO" id="GO:0046872">
    <property type="term" value="F:metal ion binding"/>
    <property type="evidence" value="ECO:0007669"/>
    <property type="project" value="UniProtKB-KW"/>
</dbReference>
<dbReference type="GO" id="GO:0042167">
    <property type="term" value="P:heme catabolic process"/>
    <property type="evidence" value="ECO:0000318"/>
    <property type="project" value="GO_Central"/>
</dbReference>
<dbReference type="Gene3D" id="3.30.70.100">
    <property type="match status" value="1"/>
</dbReference>
<dbReference type="InterPro" id="IPR007138">
    <property type="entry name" value="ABM_dom"/>
</dbReference>
<dbReference type="InterPro" id="IPR011008">
    <property type="entry name" value="Dimeric_a/b-barrel"/>
</dbReference>
<dbReference type="InterPro" id="IPR050404">
    <property type="entry name" value="Heme-degrading_MO"/>
</dbReference>
<dbReference type="PANTHER" id="PTHR34474:SF1">
    <property type="entry name" value="HEME-DEGRADING MONOOXYGENASE HMOA"/>
    <property type="match status" value="1"/>
</dbReference>
<dbReference type="PANTHER" id="PTHR34474">
    <property type="entry name" value="SIGNAL TRANSDUCTION PROTEIN TRAP"/>
    <property type="match status" value="1"/>
</dbReference>
<dbReference type="Pfam" id="PF03992">
    <property type="entry name" value="ABM"/>
    <property type="match status" value="1"/>
</dbReference>
<dbReference type="SUPFAM" id="SSF54909">
    <property type="entry name" value="Dimeric alpha+beta barrel"/>
    <property type="match status" value="1"/>
</dbReference>
<dbReference type="PROSITE" id="PS51725">
    <property type="entry name" value="ABM"/>
    <property type="match status" value="1"/>
</dbReference>
<sequence>MFVQLRKMTVKEGFADKVIERFSAEGIIEKQEGLIDVTVLEKNVRRGDEEVVVMIRWESEDHWKQWEKSDAHIAGHKANKGKPKPDYLISTEVSMYHVRAVKQGTYNQ</sequence>